<evidence type="ECO:0000255" key="1">
    <source>
        <dbReference type="HAMAP-Rule" id="MF_01956"/>
    </source>
</evidence>
<accession>B5REH0</accession>
<feature type="chain" id="PRO_1000188965" description="G/U mismatch-specific DNA glycosylase">
    <location>
        <begin position="1"/>
        <end position="168"/>
    </location>
</feature>
<organism>
    <name type="scientific">Salmonella gallinarum (strain 287/91 / NCTC 13346)</name>
    <dbReference type="NCBI Taxonomy" id="550538"/>
    <lineage>
        <taxon>Bacteria</taxon>
        <taxon>Pseudomonadati</taxon>
        <taxon>Pseudomonadota</taxon>
        <taxon>Gammaproteobacteria</taxon>
        <taxon>Enterobacterales</taxon>
        <taxon>Enterobacteriaceae</taxon>
        <taxon>Salmonella</taxon>
    </lineage>
</organism>
<keyword id="KW-0963">Cytoplasm</keyword>
<keyword id="KW-0227">DNA damage</keyword>
<keyword id="KW-0228">DNA excision</keyword>
<keyword id="KW-0234">DNA repair</keyword>
<keyword id="KW-0238">DNA-binding</keyword>
<keyword id="KW-0378">Hydrolase</keyword>
<sequence>MVKDILAPGLRVVFCGINPGLSSANTGFPFAHPANRFWKVIHLAGFTDRQLKPEEAEKLLDFRCGVTKLVDRPTVQATEVKLHELRSGGRNLIEKIEDYQPAALAVLGKQAFEQGFSQRGIAWGKKKIAIGATMVWVLPNPSGLNRIKTEKLVEAYRELDQALIMRGL</sequence>
<proteinExistence type="inferred from homology"/>
<dbReference type="EC" id="3.2.2.28" evidence="1"/>
<dbReference type="EMBL" id="AM933173">
    <property type="protein sequence ID" value="CAR38910.1"/>
    <property type="molecule type" value="Genomic_DNA"/>
</dbReference>
<dbReference type="RefSeq" id="WP_000237775.1">
    <property type="nucleotide sequence ID" value="NC_011274.1"/>
</dbReference>
<dbReference type="SMR" id="B5REH0"/>
<dbReference type="KEGG" id="seg:SG3109"/>
<dbReference type="HOGENOM" id="CLU_042829_3_1_6"/>
<dbReference type="Proteomes" id="UP000008321">
    <property type="component" value="Chromosome"/>
</dbReference>
<dbReference type="GO" id="GO:0005737">
    <property type="term" value="C:cytoplasm"/>
    <property type="evidence" value="ECO:0007669"/>
    <property type="project" value="UniProtKB-SubCell"/>
</dbReference>
<dbReference type="GO" id="GO:0003677">
    <property type="term" value="F:DNA binding"/>
    <property type="evidence" value="ECO:0007669"/>
    <property type="project" value="UniProtKB-KW"/>
</dbReference>
<dbReference type="GO" id="GO:0008263">
    <property type="term" value="F:pyrimidine-specific mismatch base pair DNA N-glycosylase activity"/>
    <property type="evidence" value="ECO:0007669"/>
    <property type="project" value="UniProtKB-UniRule"/>
</dbReference>
<dbReference type="GO" id="GO:0004844">
    <property type="term" value="F:uracil DNA N-glycosylase activity"/>
    <property type="evidence" value="ECO:0007669"/>
    <property type="project" value="TreeGrafter"/>
</dbReference>
<dbReference type="GO" id="GO:0006285">
    <property type="term" value="P:base-excision repair, AP site formation"/>
    <property type="evidence" value="ECO:0007669"/>
    <property type="project" value="UniProtKB-UniRule"/>
</dbReference>
<dbReference type="CDD" id="cd10028">
    <property type="entry name" value="UDG-F2_TDG_MUG"/>
    <property type="match status" value="1"/>
</dbReference>
<dbReference type="Gene3D" id="3.40.470.10">
    <property type="entry name" value="Uracil-DNA glycosylase-like domain"/>
    <property type="match status" value="1"/>
</dbReference>
<dbReference type="HAMAP" id="MF_01956">
    <property type="entry name" value="MUG"/>
    <property type="match status" value="1"/>
</dbReference>
<dbReference type="InterPro" id="IPR015637">
    <property type="entry name" value="MUG/TDG"/>
</dbReference>
<dbReference type="InterPro" id="IPR023502">
    <property type="entry name" value="MUG_bact"/>
</dbReference>
<dbReference type="InterPro" id="IPR005122">
    <property type="entry name" value="Uracil-DNA_glycosylase-like"/>
</dbReference>
<dbReference type="InterPro" id="IPR036895">
    <property type="entry name" value="Uracil-DNA_glycosylase-like_sf"/>
</dbReference>
<dbReference type="NCBIfam" id="NF007570">
    <property type="entry name" value="PRK10201.1"/>
    <property type="match status" value="1"/>
</dbReference>
<dbReference type="PANTHER" id="PTHR12159">
    <property type="entry name" value="G/T AND G/U MISMATCH-SPECIFIC DNA GLYCOSYLASE"/>
    <property type="match status" value="1"/>
</dbReference>
<dbReference type="PANTHER" id="PTHR12159:SF9">
    <property type="entry name" value="G_T MISMATCH-SPECIFIC THYMINE DNA GLYCOSYLASE"/>
    <property type="match status" value="1"/>
</dbReference>
<dbReference type="Pfam" id="PF03167">
    <property type="entry name" value="UDG"/>
    <property type="match status" value="1"/>
</dbReference>
<dbReference type="SUPFAM" id="SSF52141">
    <property type="entry name" value="Uracil-DNA glycosylase-like"/>
    <property type="match status" value="1"/>
</dbReference>
<gene>
    <name evidence="1" type="primary">mug</name>
    <name type="ordered locus">SG3109</name>
</gene>
<protein>
    <recommendedName>
        <fullName evidence="1">G/U mismatch-specific DNA glycosylase</fullName>
        <ecNumber evidence="1">3.2.2.28</ecNumber>
    </recommendedName>
    <alternativeName>
        <fullName evidence="1">Double-strand-specific uracil glycosylase</fullName>
    </alternativeName>
    <alternativeName>
        <fullName evidence="1">Mismatch-specific uracil DNA-glycosylase</fullName>
        <shortName evidence="1">MUG</shortName>
    </alternativeName>
</protein>
<reference key="1">
    <citation type="journal article" date="2008" name="Genome Res.">
        <title>Comparative genome analysis of Salmonella enteritidis PT4 and Salmonella gallinarum 287/91 provides insights into evolutionary and host adaptation pathways.</title>
        <authorList>
            <person name="Thomson N.R."/>
            <person name="Clayton D.J."/>
            <person name="Windhorst D."/>
            <person name="Vernikos G."/>
            <person name="Davidson S."/>
            <person name="Churcher C."/>
            <person name="Quail M.A."/>
            <person name="Stevens M."/>
            <person name="Jones M.A."/>
            <person name="Watson M."/>
            <person name="Barron A."/>
            <person name="Layton A."/>
            <person name="Pickard D."/>
            <person name="Kingsley R.A."/>
            <person name="Bignell A."/>
            <person name="Clark L."/>
            <person name="Harris B."/>
            <person name="Ormond D."/>
            <person name="Abdellah Z."/>
            <person name="Brooks K."/>
            <person name="Cherevach I."/>
            <person name="Chillingworth T."/>
            <person name="Woodward J."/>
            <person name="Norberczak H."/>
            <person name="Lord A."/>
            <person name="Arrowsmith C."/>
            <person name="Jagels K."/>
            <person name="Moule S."/>
            <person name="Mungall K."/>
            <person name="Saunders M."/>
            <person name="Whitehead S."/>
            <person name="Chabalgoity J.A."/>
            <person name="Maskell D."/>
            <person name="Humphreys T."/>
            <person name="Roberts M."/>
            <person name="Barrow P.A."/>
            <person name="Dougan G."/>
            <person name="Parkhill J."/>
        </authorList>
    </citation>
    <scope>NUCLEOTIDE SEQUENCE [LARGE SCALE GENOMIC DNA]</scope>
    <source>
        <strain>287/91 / NCTC 13346</strain>
    </source>
</reference>
<comment type="function">
    <text evidence="1">Excises ethenocytosine and uracil, which can arise by alkylation or deamination of cytosine, respectively, from the corresponding mispairs with guanine in ds-DNA. It is capable of hydrolyzing the carbon-nitrogen bond between the sugar-phosphate backbone of the DNA and the mispaired base. The complementary strand guanine functions in substrate recognition. Required for DNA damage lesion repair in stationary-phase cells.</text>
</comment>
<comment type="catalytic activity">
    <reaction evidence="1">
        <text>Specifically hydrolyzes mismatched double-stranded DNA and polynucleotides, releasing free uracil.</text>
        <dbReference type="EC" id="3.2.2.28"/>
    </reaction>
</comment>
<comment type="subunit">
    <text evidence="1">Binds DNA as a monomer.</text>
</comment>
<comment type="subcellular location">
    <subcellularLocation>
        <location evidence="1">Cytoplasm</location>
    </subcellularLocation>
</comment>
<comment type="similarity">
    <text evidence="1">Belongs to the uracil-DNA glycosylase (UDG) superfamily. TDG/mug family.</text>
</comment>
<name>MUG_SALG2</name>